<sequence length="164" mass="17846">MTRDLAPALQALSPLLGSWAGRGAGKYPTIRPFEYLEEVVFAHVGKPFLTYTQQTRAVADGKPLHSETGYLRVCRPGCVELVLAHPSGITEIEVGTYSVTGDVIELELSTRADGSIGLAPTAKEVTALDRSYRIDGDELSYSLQMRAVGQPLQDHLAAVLHRQR</sequence>
<gene>
    <name type="ordered locus">MT2790</name>
</gene>
<dbReference type="EC" id="5.99.-.-" evidence="1"/>
<dbReference type="EMBL" id="AE000516">
    <property type="protein sequence ID" value="AAK47106.1"/>
    <property type="molecule type" value="Genomic_DNA"/>
</dbReference>
<dbReference type="PIR" id="H70532">
    <property type="entry name" value="H70532"/>
</dbReference>
<dbReference type="RefSeq" id="WP_003900559.1">
    <property type="nucleotide sequence ID" value="NZ_KK341227.1"/>
</dbReference>
<dbReference type="SMR" id="P9WFG6"/>
<dbReference type="KEGG" id="mtc:MT2790"/>
<dbReference type="PATRIC" id="fig|83331.31.peg.3004"/>
<dbReference type="HOGENOM" id="CLU_085483_1_0_11"/>
<dbReference type="Proteomes" id="UP000001020">
    <property type="component" value="Chromosome"/>
</dbReference>
<dbReference type="GO" id="GO:0020037">
    <property type="term" value="F:heme binding"/>
    <property type="evidence" value="ECO:0007669"/>
    <property type="project" value="UniProtKB-UniRule"/>
</dbReference>
<dbReference type="GO" id="GO:0046872">
    <property type="term" value="F:metal ion binding"/>
    <property type="evidence" value="ECO:0007669"/>
    <property type="project" value="UniProtKB-KW"/>
</dbReference>
<dbReference type="GO" id="GO:0062213">
    <property type="term" value="F:peroxynitrite isomerase activity"/>
    <property type="evidence" value="ECO:0007669"/>
    <property type="project" value="UniProtKB-UniRule"/>
</dbReference>
<dbReference type="CDD" id="cd07828">
    <property type="entry name" value="lipocalin_heme-bd-THAP4-like"/>
    <property type="match status" value="1"/>
</dbReference>
<dbReference type="Gene3D" id="2.40.128.20">
    <property type="match status" value="1"/>
</dbReference>
<dbReference type="HAMAP" id="MF_01297">
    <property type="entry name" value="nitrobindin"/>
    <property type="match status" value="1"/>
</dbReference>
<dbReference type="InterPro" id="IPR012674">
    <property type="entry name" value="Calycin"/>
</dbReference>
<dbReference type="InterPro" id="IPR022939">
    <property type="entry name" value="Nb(III)_bact/plant"/>
</dbReference>
<dbReference type="InterPro" id="IPR045165">
    <property type="entry name" value="Nitrobindin"/>
</dbReference>
<dbReference type="InterPro" id="IPR054873">
    <property type="entry name" value="PeroxynitIsom"/>
</dbReference>
<dbReference type="InterPro" id="IPR014878">
    <property type="entry name" value="THAP4-like_heme-bd"/>
</dbReference>
<dbReference type="NCBIfam" id="NF045819">
    <property type="entry name" value="PeroxynitIsom"/>
    <property type="match status" value="1"/>
</dbReference>
<dbReference type="PANTHER" id="PTHR15854:SF4">
    <property type="entry name" value="PEROXYNITRITE ISOMERASE THAP4"/>
    <property type="match status" value="1"/>
</dbReference>
<dbReference type="PANTHER" id="PTHR15854">
    <property type="entry name" value="THAP4 PROTEIN"/>
    <property type="match status" value="1"/>
</dbReference>
<dbReference type="Pfam" id="PF08768">
    <property type="entry name" value="THAP4_heme-bd"/>
    <property type="match status" value="1"/>
</dbReference>
<dbReference type="SUPFAM" id="SSF50814">
    <property type="entry name" value="Lipocalins"/>
    <property type="match status" value="1"/>
</dbReference>
<feature type="chain" id="PRO_0000428542" description="Peroxynitrite isomerase 2">
    <location>
        <begin position="1"/>
        <end position="164"/>
    </location>
</feature>
<feature type="short sequence motif" description="GXWXGXG">
    <location>
        <begin position="17"/>
        <end position="23"/>
    </location>
</feature>
<feature type="binding site" description="axial binding residue" evidence="1">
    <location>
        <position position="155"/>
    </location>
    <ligand>
        <name>heme b</name>
        <dbReference type="ChEBI" id="CHEBI:60344"/>
    </ligand>
    <ligandPart>
        <name>Fe</name>
        <dbReference type="ChEBI" id="CHEBI:18248"/>
    </ligandPart>
</feature>
<name>NB2_MYCTO</name>
<keyword id="KW-0349">Heme</keyword>
<keyword id="KW-0408">Iron</keyword>
<keyword id="KW-0413">Isomerase</keyword>
<keyword id="KW-0479">Metal-binding</keyword>
<keyword id="KW-1185">Reference proteome</keyword>
<proteinExistence type="inferred from homology"/>
<organism>
    <name type="scientific">Mycobacterium tuberculosis (strain CDC 1551 / Oshkosh)</name>
    <dbReference type="NCBI Taxonomy" id="83331"/>
    <lineage>
        <taxon>Bacteria</taxon>
        <taxon>Bacillati</taxon>
        <taxon>Actinomycetota</taxon>
        <taxon>Actinomycetes</taxon>
        <taxon>Mycobacteriales</taxon>
        <taxon>Mycobacteriaceae</taxon>
        <taxon>Mycobacterium</taxon>
        <taxon>Mycobacterium tuberculosis complex</taxon>
    </lineage>
</organism>
<reference key="1">
    <citation type="journal article" date="2002" name="J. Bacteriol.">
        <title>Whole-genome comparison of Mycobacterium tuberculosis clinical and laboratory strains.</title>
        <authorList>
            <person name="Fleischmann R.D."/>
            <person name="Alland D."/>
            <person name="Eisen J.A."/>
            <person name="Carpenter L."/>
            <person name="White O."/>
            <person name="Peterson J.D."/>
            <person name="DeBoy R.T."/>
            <person name="Dodson R.J."/>
            <person name="Gwinn M.L."/>
            <person name="Haft D.H."/>
            <person name="Hickey E.K."/>
            <person name="Kolonay J.F."/>
            <person name="Nelson W.C."/>
            <person name="Umayam L.A."/>
            <person name="Ermolaeva M.D."/>
            <person name="Salzberg S.L."/>
            <person name="Delcher A."/>
            <person name="Utterback T.R."/>
            <person name="Weidman J.F."/>
            <person name="Khouri H.M."/>
            <person name="Gill J."/>
            <person name="Mikula A."/>
            <person name="Bishai W."/>
            <person name="Jacobs W.R. Jr."/>
            <person name="Venter J.C."/>
            <person name="Fraser C.M."/>
        </authorList>
    </citation>
    <scope>NUCLEOTIDE SEQUENCE [LARGE SCALE GENOMIC DNA]</scope>
    <source>
        <strain>CDC 1551 / Oshkosh</strain>
    </source>
</reference>
<accession>P9WFG6</accession>
<accession>L0TAF4</accession>
<accession>O07216</accession>
<accession>Q7D6Q1</accession>
<comment type="function">
    <text evidence="1">Heme-binding protein able to scavenge peroxynitrite and to protect free L-tyrosine against peroxynitrite-mediated nitration, by acting as a peroxynitrite isomerase that converts peroxynitrite to nitrate. Therefore, this protein likely plays a role in peroxynitrite sensing and in the detoxification of reactive nitrogen and oxygen species (RNS and ROS, respectively). Is able to bind nitric oxide (NO) in vitro, but may act as a sensor of peroxynitrite levels in vivo.</text>
</comment>
<comment type="catalytic activity">
    <reaction evidence="1">
        <text>peroxynitrite = nitrate</text>
        <dbReference type="Rhea" id="RHEA:63116"/>
        <dbReference type="ChEBI" id="CHEBI:17632"/>
        <dbReference type="ChEBI" id="CHEBI:25941"/>
    </reaction>
    <physiologicalReaction direction="left-to-right" evidence="1">
        <dbReference type="Rhea" id="RHEA:63117"/>
    </physiologicalReaction>
</comment>
<comment type="cofactor">
    <cofactor evidence="1">
        <name>heme b</name>
        <dbReference type="ChEBI" id="CHEBI:60344"/>
    </cofactor>
    <text evidence="1">Binds 1 heme b group per subunit, that coordinates a highly solvent-exposed Fe(III) atom.</text>
</comment>
<comment type="pathway">
    <text evidence="1">Nitrogen metabolism.</text>
</comment>
<comment type="domain">
    <text evidence="1">Forms a 10-stranded antiparallel beta-barrel structure able to accommodate a hydrophobic ligand in its interior. In fact, this fold hosts the heme group, which is located in a wide surface cleft.</text>
</comment>
<comment type="similarity">
    <text evidence="1">Belongs to the nitrobindin family.</text>
</comment>
<protein>
    <recommendedName>
        <fullName>Peroxynitrite isomerase 2</fullName>
        <ecNumber evidence="1">5.99.-.-</ecNumber>
    </recommendedName>
    <alternativeName>
        <fullName>Ferric nitrobindin</fullName>
        <shortName>Nb(III)</shortName>
    </alternativeName>
</protein>
<evidence type="ECO:0000255" key="1">
    <source>
        <dbReference type="HAMAP-Rule" id="MF_01297"/>
    </source>
</evidence>